<keyword id="KW-0067">ATP-binding</keyword>
<keyword id="KW-0325">Glycoprotein</keyword>
<keyword id="KW-0418">Kinase</keyword>
<keyword id="KW-0472">Membrane</keyword>
<keyword id="KW-0547">Nucleotide-binding</keyword>
<keyword id="KW-0675">Receptor</keyword>
<keyword id="KW-1185">Reference proteome</keyword>
<keyword id="KW-0677">Repeat</keyword>
<keyword id="KW-0723">Serine/threonine-protein kinase</keyword>
<keyword id="KW-0732">Signal</keyword>
<keyword id="KW-0808">Transferase</keyword>
<keyword id="KW-0812">Transmembrane</keyword>
<keyword id="KW-1133">Transmembrane helix</keyword>
<dbReference type="EC" id="2.7.11.-"/>
<dbReference type="EMBL" id="AL022347">
    <property type="protein sequence ID" value="CAA18471.1"/>
    <property type="status" value="ALT_SEQ"/>
    <property type="molecule type" value="Genomic_DNA"/>
</dbReference>
<dbReference type="EMBL" id="AL161559">
    <property type="protein sequence ID" value="CAB79279.1"/>
    <property type="status" value="ALT_SEQ"/>
    <property type="molecule type" value="Genomic_DNA"/>
</dbReference>
<dbReference type="EMBL" id="CP002687">
    <property type="protein sequence ID" value="AEE84727.2"/>
    <property type="molecule type" value="Genomic_DNA"/>
</dbReference>
<dbReference type="PIR" id="T04841">
    <property type="entry name" value="T04841"/>
</dbReference>
<dbReference type="RefSeq" id="NP_001320041.1">
    <property type="nucleotide sequence ID" value="NM_001341588.1"/>
</dbReference>
<dbReference type="SMR" id="O65476"/>
<dbReference type="STRING" id="3702.O65476"/>
<dbReference type="GlyCosmos" id="O65476">
    <property type="glycosylation" value="7 sites, No reported glycans"/>
</dbReference>
<dbReference type="GlyGen" id="O65476">
    <property type="glycosylation" value="7 sites"/>
</dbReference>
<dbReference type="PaxDb" id="3702-AT4G23240.1"/>
<dbReference type="EnsemblPlants" id="AT4G23240.1">
    <property type="protein sequence ID" value="AT4G23240.1"/>
    <property type="gene ID" value="AT4G23240"/>
</dbReference>
<dbReference type="GeneID" id="828423"/>
<dbReference type="Gramene" id="AT4G23240.1">
    <property type="protein sequence ID" value="AT4G23240.1"/>
    <property type="gene ID" value="AT4G23240"/>
</dbReference>
<dbReference type="KEGG" id="ath:AT4G23240"/>
<dbReference type="Araport" id="AT4G23240"/>
<dbReference type="TAIR" id="AT4G23240">
    <property type="gene designation" value="CRK16"/>
</dbReference>
<dbReference type="eggNOG" id="KOG1187">
    <property type="taxonomic scope" value="Eukaryota"/>
</dbReference>
<dbReference type="HOGENOM" id="CLU_000288_21_3_1"/>
<dbReference type="InParanoid" id="O65476"/>
<dbReference type="PhylomeDB" id="O65476"/>
<dbReference type="PRO" id="PR:O65476"/>
<dbReference type="Proteomes" id="UP000006548">
    <property type="component" value="Chromosome 4"/>
</dbReference>
<dbReference type="ExpressionAtlas" id="O65476">
    <property type="expression patterns" value="baseline and differential"/>
</dbReference>
<dbReference type="GO" id="GO:0016020">
    <property type="term" value="C:membrane"/>
    <property type="evidence" value="ECO:0007669"/>
    <property type="project" value="UniProtKB-SubCell"/>
</dbReference>
<dbReference type="GO" id="GO:0005524">
    <property type="term" value="F:ATP binding"/>
    <property type="evidence" value="ECO:0007669"/>
    <property type="project" value="UniProtKB-KW"/>
</dbReference>
<dbReference type="GO" id="GO:0106310">
    <property type="term" value="F:protein serine kinase activity"/>
    <property type="evidence" value="ECO:0007669"/>
    <property type="project" value="RHEA"/>
</dbReference>
<dbReference type="GO" id="GO:0004674">
    <property type="term" value="F:protein serine/threonine kinase activity"/>
    <property type="evidence" value="ECO:0007669"/>
    <property type="project" value="UniProtKB-KW"/>
</dbReference>
<dbReference type="CDD" id="cd23509">
    <property type="entry name" value="Gnk2-like"/>
    <property type="match status" value="2"/>
</dbReference>
<dbReference type="CDD" id="cd14066">
    <property type="entry name" value="STKc_IRAK"/>
    <property type="match status" value="1"/>
</dbReference>
<dbReference type="FunFam" id="3.30.200.20:FF:000142">
    <property type="entry name" value="Cysteine-rich receptor-like protein kinase 10"/>
    <property type="match status" value="1"/>
</dbReference>
<dbReference type="FunFam" id="1.10.510.10:FF:000129">
    <property type="entry name" value="cysteine-rich receptor-like protein kinase 10"/>
    <property type="match status" value="1"/>
</dbReference>
<dbReference type="FunFam" id="3.30.430.20:FF:000003">
    <property type="entry name" value="Cysteine-rich RLK (RECEPTOR-like protein kinase) 10"/>
    <property type="match status" value="1"/>
</dbReference>
<dbReference type="Gene3D" id="3.30.430.20">
    <property type="entry name" value="Gnk2 domain, C-X8-C-X2-C motif"/>
    <property type="match status" value="2"/>
</dbReference>
<dbReference type="Gene3D" id="3.30.200.20">
    <property type="entry name" value="Phosphorylase Kinase, domain 1"/>
    <property type="match status" value="1"/>
</dbReference>
<dbReference type="Gene3D" id="1.10.510.10">
    <property type="entry name" value="Transferase(Phosphotransferase) domain 1"/>
    <property type="match status" value="1"/>
</dbReference>
<dbReference type="InterPro" id="IPR002902">
    <property type="entry name" value="GNK2"/>
</dbReference>
<dbReference type="InterPro" id="IPR038408">
    <property type="entry name" value="GNK2_sf"/>
</dbReference>
<dbReference type="InterPro" id="IPR011009">
    <property type="entry name" value="Kinase-like_dom_sf"/>
</dbReference>
<dbReference type="InterPro" id="IPR000719">
    <property type="entry name" value="Prot_kinase_dom"/>
</dbReference>
<dbReference type="InterPro" id="IPR017441">
    <property type="entry name" value="Protein_kinase_ATP_BS"/>
</dbReference>
<dbReference type="InterPro" id="IPR001245">
    <property type="entry name" value="Ser-Thr/Tyr_kinase_cat_dom"/>
</dbReference>
<dbReference type="InterPro" id="IPR008271">
    <property type="entry name" value="Ser/Thr_kinase_AS"/>
</dbReference>
<dbReference type="PANTHER" id="PTHR27002:SF1010">
    <property type="entry name" value="CYSTEINE-RICH RECEPTOR-LIKE PROTEIN KINASE 16-RELATED"/>
    <property type="match status" value="1"/>
</dbReference>
<dbReference type="PANTHER" id="PTHR27002">
    <property type="entry name" value="RECEPTOR-LIKE SERINE/THREONINE-PROTEIN KINASE SD1-8"/>
    <property type="match status" value="1"/>
</dbReference>
<dbReference type="Pfam" id="PF07714">
    <property type="entry name" value="PK_Tyr_Ser-Thr"/>
    <property type="match status" value="1"/>
</dbReference>
<dbReference type="Pfam" id="PF01657">
    <property type="entry name" value="Stress-antifung"/>
    <property type="match status" value="2"/>
</dbReference>
<dbReference type="SMART" id="SM00220">
    <property type="entry name" value="S_TKc"/>
    <property type="match status" value="1"/>
</dbReference>
<dbReference type="SUPFAM" id="SSF56112">
    <property type="entry name" value="Protein kinase-like (PK-like)"/>
    <property type="match status" value="1"/>
</dbReference>
<dbReference type="PROSITE" id="PS51473">
    <property type="entry name" value="GNK2"/>
    <property type="match status" value="2"/>
</dbReference>
<dbReference type="PROSITE" id="PS00107">
    <property type="entry name" value="PROTEIN_KINASE_ATP"/>
    <property type="match status" value="1"/>
</dbReference>
<dbReference type="PROSITE" id="PS50011">
    <property type="entry name" value="PROTEIN_KINASE_DOM"/>
    <property type="match status" value="1"/>
</dbReference>
<dbReference type="PROSITE" id="PS00108">
    <property type="entry name" value="PROTEIN_KINASE_ST"/>
    <property type="match status" value="1"/>
</dbReference>
<reference key="1">
    <citation type="journal article" date="1999" name="Nature">
        <title>Sequence and analysis of chromosome 4 of the plant Arabidopsis thaliana.</title>
        <authorList>
            <person name="Mayer K.F.X."/>
            <person name="Schueller C."/>
            <person name="Wambutt R."/>
            <person name="Murphy G."/>
            <person name="Volckaert G."/>
            <person name="Pohl T."/>
            <person name="Duesterhoeft A."/>
            <person name="Stiekema W."/>
            <person name="Entian K.-D."/>
            <person name="Terryn N."/>
            <person name="Harris B."/>
            <person name="Ansorge W."/>
            <person name="Brandt P."/>
            <person name="Grivell L.A."/>
            <person name="Rieger M."/>
            <person name="Weichselgartner M."/>
            <person name="de Simone V."/>
            <person name="Obermaier B."/>
            <person name="Mache R."/>
            <person name="Mueller M."/>
            <person name="Kreis M."/>
            <person name="Delseny M."/>
            <person name="Puigdomenech P."/>
            <person name="Watson M."/>
            <person name="Schmidtheini T."/>
            <person name="Reichert B."/>
            <person name="Portetelle D."/>
            <person name="Perez-Alonso M."/>
            <person name="Boutry M."/>
            <person name="Bancroft I."/>
            <person name="Vos P."/>
            <person name="Hoheisel J."/>
            <person name="Zimmermann W."/>
            <person name="Wedler H."/>
            <person name="Ridley P."/>
            <person name="Langham S.-A."/>
            <person name="McCullagh B."/>
            <person name="Bilham L."/>
            <person name="Robben J."/>
            <person name="van der Schueren J."/>
            <person name="Grymonprez B."/>
            <person name="Chuang Y.-J."/>
            <person name="Vandenbussche F."/>
            <person name="Braeken M."/>
            <person name="Weltjens I."/>
            <person name="Voet M."/>
            <person name="Bastiaens I."/>
            <person name="Aert R."/>
            <person name="Defoor E."/>
            <person name="Weitzenegger T."/>
            <person name="Bothe G."/>
            <person name="Ramsperger U."/>
            <person name="Hilbert H."/>
            <person name="Braun M."/>
            <person name="Holzer E."/>
            <person name="Brandt A."/>
            <person name="Peters S."/>
            <person name="van Staveren M."/>
            <person name="Dirkse W."/>
            <person name="Mooijman P."/>
            <person name="Klein Lankhorst R."/>
            <person name="Rose M."/>
            <person name="Hauf J."/>
            <person name="Koetter P."/>
            <person name="Berneiser S."/>
            <person name="Hempel S."/>
            <person name="Feldpausch M."/>
            <person name="Lamberth S."/>
            <person name="Van den Daele H."/>
            <person name="De Keyser A."/>
            <person name="Buysshaert C."/>
            <person name="Gielen J."/>
            <person name="Villarroel R."/>
            <person name="De Clercq R."/>
            <person name="van Montagu M."/>
            <person name="Rogers J."/>
            <person name="Cronin A."/>
            <person name="Quail M.A."/>
            <person name="Bray-Allen S."/>
            <person name="Clark L."/>
            <person name="Doggett J."/>
            <person name="Hall S."/>
            <person name="Kay M."/>
            <person name="Lennard N."/>
            <person name="McLay K."/>
            <person name="Mayes R."/>
            <person name="Pettett A."/>
            <person name="Rajandream M.A."/>
            <person name="Lyne M."/>
            <person name="Benes V."/>
            <person name="Rechmann S."/>
            <person name="Borkova D."/>
            <person name="Bloecker H."/>
            <person name="Scharfe M."/>
            <person name="Grimm M."/>
            <person name="Loehnert T.-H."/>
            <person name="Dose S."/>
            <person name="de Haan M."/>
            <person name="Maarse A.C."/>
            <person name="Schaefer M."/>
            <person name="Mueller-Auer S."/>
            <person name="Gabel C."/>
            <person name="Fuchs M."/>
            <person name="Fartmann B."/>
            <person name="Granderath K."/>
            <person name="Dauner D."/>
            <person name="Herzl A."/>
            <person name="Neumann S."/>
            <person name="Argiriou A."/>
            <person name="Vitale D."/>
            <person name="Liguori R."/>
            <person name="Piravandi E."/>
            <person name="Massenet O."/>
            <person name="Quigley F."/>
            <person name="Clabauld G."/>
            <person name="Muendlein A."/>
            <person name="Felber R."/>
            <person name="Schnabl S."/>
            <person name="Hiller R."/>
            <person name="Schmidt W."/>
            <person name="Lecharny A."/>
            <person name="Aubourg S."/>
            <person name="Chefdor F."/>
            <person name="Cooke R."/>
            <person name="Berger C."/>
            <person name="Monfort A."/>
            <person name="Casacuberta E."/>
            <person name="Gibbons T."/>
            <person name="Weber N."/>
            <person name="Vandenbol M."/>
            <person name="Bargues M."/>
            <person name="Terol J."/>
            <person name="Torres A."/>
            <person name="Perez-Perez A."/>
            <person name="Purnelle B."/>
            <person name="Bent E."/>
            <person name="Johnson S."/>
            <person name="Tacon D."/>
            <person name="Jesse T."/>
            <person name="Heijnen L."/>
            <person name="Schwarz S."/>
            <person name="Scholler P."/>
            <person name="Heber S."/>
            <person name="Francs P."/>
            <person name="Bielke C."/>
            <person name="Frishman D."/>
            <person name="Haase D."/>
            <person name="Lemcke K."/>
            <person name="Mewes H.-W."/>
            <person name="Stocker S."/>
            <person name="Zaccaria P."/>
            <person name="Bevan M."/>
            <person name="Wilson R.K."/>
            <person name="de la Bastide M."/>
            <person name="Habermann K."/>
            <person name="Parnell L."/>
            <person name="Dedhia N."/>
            <person name="Gnoj L."/>
            <person name="Schutz K."/>
            <person name="Huang E."/>
            <person name="Spiegel L."/>
            <person name="Sekhon M."/>
            <person name="Murray J."/>
            <person name="Sheet P."/>
            <person name="Cordes M."/>
            <person name="Abu-Threideh J."/>
            <person name="Stoneking T."/>
            <person name="Kalicki J."/>
            <person name="Graves T."/>
            <person name="Harmon G."/>
            <person name="Edwards J."/>
            <person name="Latreille P."/>
            <person name="Courtney L."/>
            <person name="Cloud J."/>
            <person name="Abbott A."/>
            <person name="Scott K."/>
            <person name="Johnson D."/>
            <person name="Minx P."/>
            <person name="Bentley D."/>
            <person name="Fulton B."/>
            <person name="Miller N."/>
            <person name="Greco T."/>
            <person name="Kemp K."/>
            <person name="Kramer J."/>
            <person name="Fulton L."/>
            <person name="Mardis E."/>
            <person name="Dante M."/>
            <person name="Pepin K."/>
            <person name="Hillier L.W."/>
            <person name="Nelson J."/>
            <person name="Spieth J."/>
            <person name="Ryan E."/>
            <person name="Andrews S."/>
            <person name="Geisel C."/>
            <person name="Layman D."/>
            <person name="Du H."/>
            <person name="Ali J."/>
            <person name="Berghoff A."/>
            <person name="Jones K."/>
            <person name="Drone K."/>
            <person name="Cotton M."/>
            <person name="Joshu C."/>
            <person name="Antonoiu B."/>
            <person name="Zidanic M."/>
            <person name="Strong C."/>
            <person name="Sun H."/>
            <person name="Lamar B."/>
            <person name="Yordan C."/>
            <person name="Ma P."/>
            <person name="Zhong J."/>
            <person name="Preston R."/>
            <person name="Vil D."/>
            <person name="Shekher M."/>
            <person name="Matero A."/>
            <person name="Shah R."/>
            <person name="Swaby I.K."/>
            <person name="O'Shaughnessy A."/>
            <person name="Rodriguez M."/>
            <person name="Hoffman J."/>
            <person name="Till S."/>
            <person name="Granat S."/>
            <person name="Shohdy N."/>
            <person name="Hasegawa A."/>
            <person name="Hameed A."/>
            <person name="Lodhi M."/>
            <person name="Johnson A."/>
            <person name="Chen E."/>
            <person name="Marra M.A."/>
            <person name="Martienssen R."/>
            <person name="McCombie W.R."/>
        </authorList>
    </citation>
    <scope>NUCLEOTIDE SEQUENCE [LARGE SCALE GENOMIC DNA]</scope>
    <source>
        <strain>cv. Columbia</strain>
    </source>
</reference>
<reference key="2">
    <citation type="journal article" date="2017" name="Plant J.">
        <title>Araport11: a complete reannotation of the Arabidopsis thaliana reference genome.</title>
        <authorList>
            <person name="Cheng C.Y."/>
            <person name="Krishnakumar V."/>
            <person name="Chan A.P."/>
            <person name="Thibaud-Nissen F."/>
            <person name="Schobel S."/>
            <person name="Town C.D."/>
        </authorList>
    </citation>
    <scope>GENOME REANNOTATION</scope>
    <source>
        <strain>cv. Columbia</strain>
    </source>
</reference>
<reference key="3">
    <citation type="journal article" date="2001" name="Plant Physiol.">
        <title>A superfamily of proteins with novel cysteine-rich repeats.</title>
        <authorList>
            <person name="Chen Z."/>
        </authorList>
    </citation>
    <scope>GENE FAMILY ORGANIZATION</scope>
    <scope>NOMENCLATURE</scope>
</reference>
<accession>O65476</accession>
<accession>F4JNG9</accession>
<comment type="catalytic activity">
    <reaction>
        <text>L-seryl-[protein] + ATP = O-phospho-L-seryl-[protein] + ADP + H(+)</text>
        <dbReference type="Rhea" id="RHEA:17989"/>
        <dbReference type="Rhea" id="RHEA-COMP:9863"/>
        <dbReference type="Rhea" id="RHEA-COMP:11604"/>
        <dbReference type="ChEBI" id="CHEBI:15378"/>
        <dbReference type="ChEBI" id="CHEBI:29999"/>
        <dbReference type="ChEBI" id="CHEBI:30616"/>
        <dbReference type="ChEBI" id="CHEBI:83421"/>
        <dbReference type="ChEBI" id="CHEBI:456216"/>
    </reaction>
</comment>
<comment type="catalytic activity">
    <reaction>
        <text>L-threonyl-[protein] + ATP = O-phospho-L-threonyl-[protein] + ADP + H(+)</text>
        <dbReference type="Rhea" id="RHEA:46608"/>
        <dbReference type="Rhea" id="RHEA-COMP:11060"/>
        <dbReference type="Rhea" id="RHEA-COMP:11605"/>
        <dbReference type="ChEBI" id="CHEBI:15378"/>
        <dbReference type="ChEBI" id="CHEBI:30013"/>
        <dbReference type="ChEBI" id="CHEBI:30616"/>
        <dbReference type="ChEBI" id="CHEBI:61977"/>
        <dbReference type="ChEBI" id="CHEBI:456216"/>
    </reaction>
</comment>
<comment type="subcellular location">
    <subcellularLocation>
        <location evidence="5">Membrane</location>
        <topology evidence="5">Single-pass membrane protein</topology>
    </subcellularLocation>
</comment>
<comment type="similarity">
    <text evidence="2">Belongs to the protein kinase superfamily. Ser/Thr protein kinase family. CRK subfamily.</text>
</comment>
<comment type="sequence caution" evidence="5">
    <conflict type="erroneous gene model prediction">
        <sequence resource="EMBL-CDS" id="CAA18471"/>
    </conflict>
</comment>
<comment type="sequence caution" evidence="5">
    <conflict type="erroneous gene model prediction">
        <sequence resource="EMBL-CDS" id="CAB79279"/>
    </conflict>
</comment>
<sequence>MIFIMKLKNLLPIFCFFLVSFSISSAQKCGKTGLFKPNDKYDINRHLLLSSLASNVSARGGFYNASIGQGPDRLYASGTCIQGSEPELCSACIDSAFIRVIKKCHNQTEALDWSSFNEEYPCMIRYSNRSFFGLLEMTPFFKNYNATDFQVNLTEFYQKWEALMLGVIADAISSPNPKFYGAGTGKIGIQTVYAFVLCSKDISPWNCSRCLRGNVDNYKLSCSGKPRGHSFSPSCYMRWDLYQFYGFIEYRASPTLPREKGRISELSDDGGKISTRNILGITVALAFFITVLLVLGYALSRRRKAYQEFATENDITTSGSLQFDFKAIEAATNNFQKSNKLGHGGFGEVFKGTFPNGTEVAVKRLSKISGQGEEEFKNEVLLVAKLQHRNLVRLLGFSVEGEEKILVYEYMPNKSLDYFLFDHRRRGQLDWRTRYNIIRGVTRGILYLHQDSRLTIIHRDLKAGNILLDVDMNPKIADFGVARNFRVDQTEATTGRVVGTFGYMPPEYVANGQFSMKSDVYSFGVLILEIIVGKKSSSFHEIDGSVGNLVTYVWRLWNNESFLELVDPAMGESYDKDEVIRCIHISLLCVQENPADRPTMSTVFQMLTNTFLTLPVPQLPGFVFRVRSEPNPLAERLEPGPSTTMSFACSIDDASITSVDLR</sequence>
<gene>
    <name type="primary">CRK16</name>
    <name type="ordered locus">At4g23240</name>
    <name type="ORF">F21P8.130</name>
</gene>
<proteinExistence type="inferred from homology"/>
<evidence type="ECO:0000255" key="1"/>
<evidence type="ECO:0000255" key="2">
    <source>
        <dbReference type="PROSITE-ProRule" id="PRU00159"/>
    </source>
</evidence>
<evidence type="ECO:0000255" key="3">
    <source>
        <dbReference type="PROSITE-ProRule" id="PRU00806"/>
    </source>
</evidence>
<evidence type="ECO:0000255" key="4">
    <source>
        <dbReference type="PROSITE-ProRule" id="PRU10027"/>
    </source>
</evidence>
<evidence type="ECO:0000305" key="5"/>
<name>CRK16_ARATH</name>
<protein>
    <recommendedName>
        <fullName>Putative cysteine-rich receptor-like protein kinase 16</fullName>
        <shortName>Cysteine-rich RLK16</shortName>
        <ecNumber>2.7.11.-</ecNumber>
    </recommendedName>
</protein>
<organism>
    <name type="scientific">Arabidopsis thaliana</name>
    <name type="common">Mouse-ear cress</name>
    <dbReference type="NCBI Taxonomy" id="3702"/>
    <lineage>
        <taxon>Eukaryota</taxon>
        <taxon>Viridiplantae</taxon>
        <taxon>Streptophyta</taxon>
        <taxon>Embryophyta</taxon>
        <taxon>Tracheophyta</taxon>
        <taxon>Spermatophyta</taxon>
        <taxon>Magnoliopsida</taxon>
        <taxon>eudicotyledons</taxon>
        <taxon>Gunneridae</taxon>
        <taxon>Pentapetalae</taxon>
        <taxon>rosids</taxon>
        <taxon>malvids</taxon>
        <taxon>Brassicales</taxon>
        <taxon>Brassicaceae</taxon>
        <taxon>Camelineae</taxon>
        <taxon>Arabidopsis</taxon>
    </lineage>
</organism>
<feature type="signal peptide" evidence="1">
    <location>
        <begin position="1"/>
        <end position="26"/>
    </location>
</feature>
<feature type="chain" id="PRO_0000295063" description="Putative cysteine-rich receptor-like protein kinase 16">
    <location>
        <begin position="27"/>
        <end position="662"/>
    </location>
</feature>
<feature type="topological domain" description="Extracellular" evidence="1">
    <location>
        <begin position="27"/>
        <end position="277"/>
    </location>
</feature>
<feature type="transmembrane region" description="Helical" evidence="1">
    <location>
        <begin position="278"/>
        <end position="298"/>
    </location>
</feature>
<feature type="topological domain" description="Cytoplasmic" evidence="1">
    <location>
        <begin position="299"/>
        <end position="662"/>
    </location>
</feature>
<feature type="domain" description="Gnk2-homologous 1" evidence="3">
    <location>
        <begin position="27"/>
        <end position="131"/>
    </location>
</feature>
<feature type="domain" description="Gnk2-homologous 2" evidence="3">
    <location>
        <begin position="137"/>
        <end position="244"/>
    </location>
</feature>
<feature type="domain" description="Protein kinase" evidence="2">
    <location>
        <begin position="335"/>
        <end position="612"/>
    </location>
</feature>
<feature type="active site" description="Proton acceptor" evidence="2 4">
    <location>
        <position position="460"/>
    </location>
</feature>
<feature type="binding site" evidence="2">
    <location>
        <begin position="341"/>
        <end position="349"/>
    </location>
    <ligand>
        <name>ATP</name>
        <dbReference type="ChEBI" id="CHEBI:30616"/>
    </ligand>
</feature>
<feature type="binding site" evidence="2">
    <location>
        <position position="363"/>
    </location>
    <ligand>
        <name>ATP</name>
        <dbReference type="ChEBI" id="CHEBI:30616"/>
    </ligand>
</feature>
<feature type="glycosylation site" description="N-linked (GlcNAc...) asparagine" evidence="1">
    <location>
        <position position="55"/>
    </location>
</feature>
<feature type="glycosylation site" description="N-linked (GlcNAc...) asparagine" evidence="1">
    <location>
        <position position="64"/>
    </location>
</feature>
<feature type="glycosylation site" description="N-linked (GlcNAc...) asparagine" evidence="1">
    <location>
        <position position="106"/>
    </location>
</feature>
<feature type="glycosylation site" description="N-linked (GlcNAc...) asparagine" evidence="1">
    <location>
        <position position="128"/>
    </location>
</feature>
<feature type="glycosylation site" description="N-linked (GlcNAc...) asparagine" evidence="1">
    <location>
        <position position="145"/>
    </location>
</feature>
<feature type="glycosylation site" description="N-linked (GlcNAc...) asparagine" evidence="1">
    <location>
        <position position="152"/>
    </location>
</feature>
<feature type="glycosylation site" description="N-linked (GlcNAc...) asparagine" evidence="1">
    <location>
        <position position="206"/>
    </location>
</feature>